<accession>A9N269</accession>
<gene>
    <name evidence="1" type="primary">nadE</name>
    <name type="ordered locus">SPAB_02031</name>
</gene>
<evidence type="ECO:0000255" key="1">
    <source>
        <dbReference type="HAMAP-Rule" id="MF_00193"/>
    </source>
</evidence>
<sequence length="275" mass="30446">MTLQQEIIQALGAKPHINPEEEIRRSVDFLKAYLKTYPFLKSLVLGISGGQDSTLAGKLSQMAIAELREETGDNALQFIAVRLPYGVQADEQDCQDAIAFIQPDRVLTVNIKGAVLASEQALREAGIELSDFVRGNEKARERMKAQYSIAGMTHGVVVGTDHAAEAITGFFTKYGDGGTDINPLHRLNKRQGKQLLAALGCPEHLYKKVPTADLEDDRPSLPDEAALGVTYDNIDDYLEGKTLDSAIAKTIEGWYVKTEHKRRLPITVFDDFWKK</sequence>
<organism>
    <name type="scientific">Salmonella paratyphi B (strain ATCC BAA-1250 / SPB7)</name>
    <dbReference type="NCBI Taxonomy" id="1016998"/>
    <lineage>
        <taxon>Bacteria</taxon>
        <taxon>Pseudomonadati</taxon>
        <taxon>Pseudomonadota</taxon>
        <taxon>Gammaproteobacteria</taxon>
        <taxon>Enterobacterales</taxon>
        <taxon>Enterobacteriaceae</taxon>
        <taxon>Salmonella</taxon>
    </lineage>
</organism>
<reference key="1">
    <citation type="submission" date="2007-11" db="EMBL/GenBank/DDBJ databases">
        <authorList>
            <consortium name="The Salmonella enterica serovar Paratyphi B Genome Sequencing Project"/>
            <person name="McClelland M."/>
            <person name="Sanderson E.K."/>
            <person name="Porwollik S."/>
            <person name="Spieth J."/>
            <person name="Clifton W.S."/>
            <person name="Fulton R."/>
            <person name="Cordes M."/>
            <person name="Wollam A."/>
            <person name="Shah N."/>
            <person name="Pepin K."/>
            <person name="Bhonagiri V."/>
            <person name="Nash W."/>
            <person name="Johnson M."/>
            <person name="Thiruvilangam P."/>
            <person name="Wilson R."/>
        </authorList>
    </citation>
    <scope>NUCLEOTIDE SEQUENCE [LARGE SCALE GENOMIC DNA]</scope>
    <source>
        <strain>ATCC BAA-1250 / SPB7</strain>
    </source>
</reference>
<keyword id="KW-0067">ATP-binding</keyword>
<keyword id="KW-0436">Ligase</keyword>
<keyword id="KW-0460">Magnesium</keyword>
<keyword id="KW-0479">Metal-binding</keyword>
<keyword id="KW-0520">NAD</keyword>
<keyword id="KW-0547">Nucleotide-binding</keyword>
<comment type="function">
    <text evidence="1">Catalyzes the ATP-dependent amidation of deamido-NAD to form NAD. Uses ammonia as a nitrogen source.</text>
</comment>
<comment type="catalytic activity">
    <reaction evidence="1">
        <text>deamido-NAD(+) + NH4(+) + ATP = AMP + diphosphate + NAD(+) + H(+)</text>
        <dbReference type="Rhea" id="RHEA:21188"/>
        <dbReference type="ChEBI" id="CHEBI:15378"/>
        <dbReference type="ChEBI" id="CHEBI:28938"/>
        <dbReference type="ChEBI" id="CHEBI:30616"/>
        <dbReference type="ChEBI" id="CHEBI:33019"/>
        <dbReference type="ChEBI" id="CHEBI:57540"/>
        <dbReference type="ChEBI" id="CHEBI:58437"/>
        <dbReference type="ChEBI" id="CHEBI:456215"/>
        <dbReference type="EC" id="6.3.1.5"/>
    </reaction>
</comment>
<comment type="pathway">
    <text evidence="1">Cofactor biosynthesis; NAD(+) biosynthesis; NAD(+) from deamido-NAD(+) (ammonia route): step 1/1.</text>
</comment>
<comment type="subunit">
    <text evidence="1">Homodimer.</text>
</comment>
<comment type="similarity">
    <text evidence="1">Belongs to the NAD synthetase family.</text>
</comment>
<protein>
    <recommendedName>
        <fullName evidence="1">NH(3)-dependent NAD(+) synthetase</fullName>
        <ecNumber evidence="1">6.3.1.5</ecNumber>
    </recommendedName>
</protein>
<proteinExistence type="inferred from homology"/>
<dbReference type="EC" id="6.3.1.5" evidence="1"/>
<dbReference type="EMBL" id="CP000886">
    <property type="protein sequence ID" value="ABX67418.1"/>
    <property type="molecule type" value="Genomic_DNA"/>
</dbReference>
<dbReference type="RefSeq" id="WP_000174982.1">
    <property type="nucleotide sequence ID" value="NC_010102.1"/>
</dbReference>
<dbReference type="SMR" id="A9N269"/>
<dbReference type="KEGG" id="spq:SPAB_02031"/>
<dbReference type="PATRIC" id="fig|1016998.12.peg.1920"/>
<dbReference type="HOGENOM" id="CLU_059327_3_0_6"/>
<dbReference type="BioCyc" id="SENT1016998:SPAB_RS08295-MONOMER"/>
<dbReference type="UniPathway" id="UPA00253">
    <property type="reaction ID" value="UER00333"/>
</dbReference>
<dbReference type="Proteomes" id="UP000008556">
    <property type="component" value="Chromosome"/>
</dbReference>
<dbReference type="GO" id="GO:0005737">
    <property type="term" value="C:cytoplasm"/>
    <property type="evidence" value="ECO:0007669"/>
    <property type="project" value="InterPro"/>
</dbReference>
<dbReference type="GO" id="GO:0005524">
    <property type="term" value="F:ATP binding"/>
    <property type="evidence" value="ECO:0007669"/>
    <property type="project" value="UniProtKB-UniRule"/>
</dbReference>
<dbReference type="GO" id="GO:0004359">
    <property type="term" value="F:glutaminase activity"/>
    <property type="evidence" value="ECO:0007669"/>
    <property type="project" value="InterPro"/>
</dbReference>
<dbReference type="GO" id="GO:0046872">
    <property type="term" value="F:metal ion binding"/>
    <property type="evidence" value="ECO:0007669"/>
    <property type="project" value="UniProtKB-KW"/>
</dbReference>
<dbReference type="GO" id="GO:0003952">
    <property type="term" value="F:NAD+ synthase (glutamine-hydrolyzing) activity"/>
    <property type="evidence" value="ECO:0007669"/>
    <property type="project" value="InterPro"/>
</dbReference>
<dbReference type="GO" id="GO:0008795">
    <property type="term" value="F:NAD+ synthase activity"/>
    <property type="evidence" value="ECO:0007669"/>
    <property type="project" value="UniProtKB-UniRule"/>
</dbReference>
<dbReference type="GO" id="GO:0009435">
    <property type="term" value="P:NAD biosynthetic process"/>
    <property type="evidence" value="ECO:0007669"/>
    <property type="project" value="UniProtKB-UniRule"/>
</dbReference>
<dbReference type="CDD" id="cd00553">
    <property type="entry name" value="NAD_synthase"/>
    <property type="match status" value="1"/>
</dbReference>
<dbReference type="FunFam" id="3.40.50.620:FF:000015">
    <property type="entry name" value="NH(3)-dependent NAD(+) synthetase"/>
    <property type="match status" value="1"/>
</dbReference>
<dbReference type="Gene3D" id="3.40.50.620">
    <property type="entry name" value="HUPs"/>
    <property type="match status" value="1"/>
</dbReference>
<dbReference type="HAMAP" id="MF_00193">
    <property type="entry name" value="NadE_ammonia_dep"/>
    <property type="match status" value="1"/>
</dbReference>
<dbReference type="InterPro" id="IPR022310">
    <property type="entry name" value="NAD/GMP_synthase"/>
</dbReference>
<dbReference type="InterPro" id="IPR003694">
    <property type="entry name" value="NAD_synthase"/>
</dbReference>
<dbReference type="InterPro" id="IPR022926">
    <property type="entry name" value="NH(3)-dep_NAD(+)_synth"/>
</dbReference>
<dbReference type="InterPro" id="IPR014729">
    <property type="entry name" value="Rossmann-like_a/b/a_fold"/>
</dbReference>
<dbReference type="NCBIfam" id="TIGR00552">
    <property type="entry name" value="nadE"/>
    <property type="match status" value="1"/>
</dbReference>
<dbReference type="NCBIfam" id="NF001979">
    <property type="entry name" value="PRK00768.1"/>
    <property type="match status" value="1"/>
</dbReference>
<dbReference type="PANTHER" id="PTHR23090">
    <property type="entry name" value="NH 3 /GLUTAMINE-DEPENDENT NAD + SYNTHETASE"/>
    <property type="match status" value="1"/>
</dbReference>
<dbReference type="PANTHER" id="PTHR23090:SF7">
    <property type="entry name" value="NH(3)-DEPENDENT NAD(+) SYNTHETASE"/>
    <property type="match status" value="1"/>
</dbReference>
<dbReference type="Pfam" id="PF02540">
    <property type="entry name" value="NAD_synthase"/>
    <property type="match status" value="1"/>
</dbReference>
<dbReference type="SUPFAM" id="SSF52402">
    <property type="entry name" value="Adenine nucleotide alpha hydrolases-like"/>
    <property type="match status" value="1"/>
</dbReference>
<name>NADE_SALPB</name>
<feature type="chain" id="PRO_1000077596" description="NH(3)-dependent NAD(+) synthetase">
    <location>
        <begin position="1"/>
        <end position="275"/>
    </location>
</feature>
<feature type="binding site" evidence="1">
    <location>
        <begin position="46"/>
        <end position="53"/>
    </location>
    <ligand>
        <name>ATP</name>
        <dbReference type="ChEBI" id="CHEBI:30616"/>
    </ligand>
</feature>
<feature type="binding site" evidence="1">
    <location>
        <position position="52"/>
    </location>
    <ligand>
        <name>Mg(2+)</name>
        <dbReference type="ChEBI" id="CHEBI:18420"/>
    </ligand>
</feature>
<feature type="binding site" evidence="1">
    <location>
        <position position="140"/>
    </location>
    <ligand>
        <name>deamido-NAD(+)</name>
        <dbReference type="ChEBI" id="CHEBI:58437"/>
    </ligand>
</feature>
<feature type="binding site" evidence="1">
    <location>
        <position position="160"/>
    </location>
    <ligand>
        <name>ATP</name>
        <dbReference type="ChEBI" id="CHEBI:30616"/>
    </ligand>
</feature>
<feature type="binding site" evidence="1">
    <location>
        <position position="165"/>
    </location>
    <ligand>
        <name>Mg(2+)</name>
        <dbReference type="ChEBI" id="CHEBI:18420"/>
    </ligand>
</feature>
<feature type="binding site" evidence="1">
    <location>
        <position position="173"/>
    </location>
    <ligand>
        <name>deamido-NAD(+)</name>
        <dbReference type="ChEBI" id="CHEBI:58437"/>
    </ligand>
</feature>
<feature type="binding site" evidence="1">
    <location>
        <position position="180"/>
    </location>
    <ligand>
        <name>deamido-NAD(+)</name>
        <dbReference type="ChEBI" id="CHEBI:58437"/>
    </ligand>
</feature>
<feature type="binding site" evidence="1">
    <location>
        <position position="189"/>
    </location>
    <ligand>
        <name>ATP</name>
        <dbReference type="ChEBI" id="CHEBI:30616"/>
    </ligand>
</feature>
<feature type="binding site" evidence="1">
    <location>
        <position position="211"/>
    </location>
    <ligand>
        <name>ATP</name>
        <dbReference type="ChEBI" id="CHEBI:30616"/>
    </ligand>
</feature>
<feature type="binding site" evidence="1">
    <location>
        <begin position="260"/>
        <end position="261"/>
    </location>
    <ligand>
        <name>deamido-NAD(+)</name>
        <dbReference type="ChEBI" id="CHEBI:58437"/>
    </ligand>
</feature>